<accession>Q9KV29</accession>
<organism>
    <name type="scientific">Vibrio cholerae serotype O1 (strain ATCC 39315 / El Tor Inaba N16961)</name>
    <dbReference type="NCBI Taxonomy" id="243277"/>
    <lineage>
        <taxon>Bacteria</taxon>
        <taxon>Pseudomonadati</taxon>
        <taxon>Pseudomonadota</taxon>
        <taxon>Gammaproteobacteria</taxon>
        <taxon>Vibrionales</taxon>
        <taxon>Vibrionaceae</taxon>
        <taxon>Vibrio</taxon>
    </lineage>
</organism>
<dbReference type="EC" id="2.7.7.6" evidence="1"/>
<dbReference type="EMBL" id="AE003852">
    <property type="protein sequence ID" value="AAF93502.1"/>
    <property type="molecule type" value="Genomic_DNA"/>
</dbReference>
<dbReference type="PIR" id="G82336">
    <property type="entry name" value="G82336"/>
</dbReference>
<dbReference type="RefSeq" id="NP_229983.1">
    <property type="nucleotide sequence ID" value="NC_002505.1"/>
</dbReference>
<dbReference type="RefSeq" id="WP_000653994.1">
    <property type="nucleotide sequence ID" value="NZ_LT906614.1"/>
</dbReference>
<dbReference type="SMR" id="Q9KV29"/>
<dbReference type="STRING" id="243277.VC_0329"/>
<dbReference type="DNASU" id="2615095"/>
<dbReference type="EnsemblBacteria" id="AAF93502">
    <property type="protein sequence ID" value="AAF93502"/>
    <property type="gene ID" value="VC_0329"/>
</dbReference>
<dbReference type="GeneID" id="69720936"/>
<dbReference type="KEGG" id="vch:VC_0329"/>
<dbReference type="PATRIC" id="fig|243277.26.peg.306"/>
<dbReference type="eggNOG" id="COG0086">
    <property type="taxonomic scope" value="Bacteria"/>
</dbReference>
<dbReference type="HOGENOM" id="CLU_000524_3_1_6"/>
<dbReference type="Proteomes" id="UP000000584">
    <property type="component" value="Chromosome 1"/>
</dbReference>
<dbReference type="GO" id="GO:0000428">
    <property type="term" value="C:DNA-directed RNA polymerase complex"/>
    <property type="evidence" value="ECO:0007669"/>
    <property type="project" value="UniProtKB-KW"/>
</dbReference>
<dbReference type="GO" id="GO:0003677">
    <property type="term" value="F:DNA binding"/>
    <property type="evidence" value="ECO:0007669"/>
    <property type="project" value="UniProtKB-UniRule"/>
</dbReference>
<dbReference type="GO" id="GO:0003899">
    <property type="term" value="F:DNA-directed RNA polymerase activity"/>
    <property type="evidence" value="ECO:0007669"/>
    <property type="project" value="UniProtKB-UniRule"/>
</dbReference>
<dbReference type="GO" id="GO:0000287">
    <property type="term" value="F:magnesium ion binding"/>
    <property type="evidence" value="ECO:0007669"/>
    <property type="project" value="UniProtKB-UniRule"/>
</dbReference>
<dbReference type="GO" id="GO:0008270">
    <property type="term" value="F:zinc ion binding"/>
    <property type="evidence" value="ECO:0007669"/>
    <property type="project" value="UniProtKB-UniRule"/>
</dbReference>
<dbReference type="GO" id="GO:0006351">
    <property type="term" value="P:DNA-templated transcription"/>
    <property type="evidence" value="ECO:0007669"/>
    <property type="project" value="UniProtKB-UniRule"/>
</dbReference>
<dbReference type="CDD" id="cd02655">
    <property type="entry name" value="RNAP_beta'_C"/>
    <property type="match status" value="1"/>
</dbReference>
<dbReference type="CDD" id="cd01609">
    <property type="entry name" value="RNAP_beta'_N"/>
    <property type="match status" value="1"/>
</dbReference>
<dbReference type="FunFam" id="1.10.132.30:FF:000003">
    <property type="entry name" value="DNA-directed RNA polymerase subunit beta"/>
    <property type="match status" value="1"/>
</dbReference>
<dbReference type="FunFam" id="1.10.150.390:FF:000002">
    <property type="entry name" value="DNA-directed RNA polymerase subunit beta"/>
    <property type="match status" value="1"/>
</dbReference>
<dbReference type="FunFam" id="1.10.274.100:FF:000002">
    <property type="entry name" value="DNA-directed RNA polymerase subunit beta"/>
    <property type="match status" value="1"/>
</dbReference>
<dbReference type="FunFam" id="1.10.40.90:FF:000001">
    <property type="entry name" value="DNA-directed RNA polymerase subunit beta"/>
    <property type="match status" value="1"/>
</dbReference>
<dbReference type="FunFam" id="2.40.50.100:FF:000016">
    <property type="entry name" value="DNA-directed RNA polymerase subunit beta"/>
    <property type="match status" value="1"/>
</dbReference>
<dbReference type="FunFam" id="4.10.860.120:FF:000001">
    <property type="entry name" value="DNA-directed RNA polymerase subunit beta"/>
    <property type="match status" value="1"/>
</dbReference>
<dbReference type="Gene3D" id="1.10.132.30">
    <property type="match status" value="1"/>
</dbReference>
<dbReference type="Gene3D" id="1.10.150.390">
    <property type="match status" value="1"/>
</dbReference>
<dbReference type="Gene3D" id="1.10.1790.20">
    <property type="match status" value="1"/>
</dbReference>
<dbReference type="Gene3D" id="1.10.40.90">
    <property type="match status" value="1"/>
</dbReference>
<dbReference type="Gene3D" id="2.40.40.20">
    <property type="match status" value="1"/>
</dbReference>
<dbReference type="Gene3D" id="2.40.50.100">
    <property type="match status" value="3"/>
</dbReference>
<dbReference type="Gene3D" id="4.10.860.120">
    <property type="entry name" value="RNA polymerase II, clamp domain"/>
    <property type="match status" value="1"/>
</dbReference>
<dbReference type="Gene3D" id="1.10.274.100">
    <property type="entry name" value="RNA polymerase Rpb1, domain 3"/>
    <property type="match status" value="1"/>
</dbReference>
<dbReference type="HAMAP" id="MF_01322">
    <property type="entry name" value="RNApol_bact_RpoC"/>
    <property type="match status" value="1"/>
</dbReference>
<dbReference type="InterPro" id="IPR045867">
    <property type="entry name" value="DNA-dir_RpoC_beta_prime"/>
</dbReference>
<dbReference type="InterPro" id="IPR012754">
    <property type="entry name" value="DNA-dir_RpoC_beta_prime_bact"/>
</dbReference>
<dbReference type="InterPro" id="IPR000722">
    <property type="entry name" value="RNA_pol_asu"/>
</dbReference>
<dbReference type="InterPro" id="IPR006592">
    <property type="entry name" value="RNA_pol_N"/>
</dbReference>
<dbReference type="InterPro" id="IPR007080">
    <property type="entry name" value="RNA_pol_Rpb1_1"/>
</dbReference>
<dbReference type="InterPro" id="IPR007066">
    <property type="entry name" value="RNA_pol_Rpb1_3"/>
</dbReference>
<dbReference type="InterPro" id="IPR042102">
    <property type="entry name" value="RNA_pol_Rpb1_3_sf"/>
</dbReference>
<dbReference type="InterPro" id="IPR007083">
    <property type="entry name" value="RNA_pol_Rpb1_4"/>
</dbReference>
<dbReference type="InterPro" id="IPR007081">
    <property type="entry name" value="RNA_pol_Rpb1_5"/>
</dbReference>
<dbReference type="InterPro" id="IPR044893">
    <property type="entry name" value="RNA_pol_Rpb1_clamp_domain"/>
</dbReference>
<dbReference type="InterPro" id="IPR038120">
    <property type="entry name" value="Rpb1_funnel_sf"/>
</dbReference>
<dbReference type="NCBIfam" id="TIGR02386">
    <property type="entry name" value="rpoC_TIGR"/>
    <property type="match status" value="1"/>
</dbReference>
<dbReference type="PANTHER" id="PTHR19376">
    <property type="entry name" value="DNA-DIRECTED RNA POLYMERASE"/>
    <property type="match status" value="1"/>
</dbReference>
<dbReference type="PANTHER" id="PTHR19376:SF54">
    <property type="entry name" value="DNA-DIRECTED RNA POLYMERASE SUBUNIT BETA"/>
    <property type="match status" value="1"/>
</dbReference>
<dbReference type="Pfam" id="PF04997">
    <property type="entry name" value="RNA_pol_Rpb1_1"/>
    <property type="match status" value="1"/>
</dbReference>
<dbReference type="Pfam" id="PF00623">
    <property type="entry name" value="RNA_pol_Rpb1_2"/>
    <property type="match status" value="2"/>
</dbReference>
<dbReference type="Pfam" id="PF04983">
    <property type="entry name" value="RNA_pol_Rpb1_3"/>
    <property type="match status" value="1"/>
</dbReference>
<dbReference type="Pfam" id="PF05000">
    <property type="entry name" value="RNA_pol_Rpb1_4"/>
    <property type="match status" value="1"/>
</dbReference>
<dbReference type="Pfam" id="PF04998">
    <property type="entry name" value="RNA_pol_Rpb1_5"/>
    <property type="match status" value="1"/>
</dbReference>
<dbReference type="SMART" id="SM00663">
    <property type="entry name" value="RPOLA_N"/>
    <property type="match status" value="1"/>
</dbReference>
<dbReference type="SUPFAM" id="SSF64484">
    <property type="entry name" value="beta and beta-prime subunits of DNA dependent RNA-polymerase"/>
    <property type="match status" value="1"/>
</dbReference>
<sequence length="1401" mass="155023">MKDLLNFLKAQHKTEEFDAIKIGLASPDMIRSWSFGEVKKPETINYRTFKPERDGLFCARIFGPVKDYECLCGKYKRLKHRGVICEKCGVEVTQTKVRRDRMGHIELASPVAHIWFLKSLPSRIGLLMDMPLRDIERVLYFEMYVVTEPGMTDLERGQMLTEEEYLDRLEEWGDEFTAKMGAEAIKDLLASMDLPAEAEQMREELDTTNSETKRKKLTKRLKLVEAFVASGNKPEWMILTVLPVLPPDLRPLVPLDGGRFATSDLNDLYRRVINRNNRLKRLLELAAPDIIVRNEKRMLQESVDALLDNGRRGRAITGSNKRPLKSLADMIKGKQGRFRQNLLGKRVDYSGRSVITVGPYLRLHQCGLPKKMALELFKPFIYSKLETRGLATTIKAAKKMVEREEAVVWDILDEVIREHPVLLNRAPTLHRLGIQAFEPVLIEGKAIQLHPLVCAAYNADFDGDQMAVHVPLTLEAQLEARTLMMSTNNILSPASGDPIIVPSQDVVLGLYYMTREKINAKGEGMYLTGPAEAEKAYRTKTAELHARVKVRITETIKHENGKLTTETKMIDTTVGRAMLWQIVPKGLPYSLVNQKLGKKQISNLLNEAYRKLGLKDTVIFADQIMYTGFAYAALSGVSVGIDDMVVPAAKYTEIAEAEEEVREIQEQFQSGLVTAGERYNKVIDIWASTNDRVAKAMMENLSSEQVINRQGEQEKQESFNSIYMMADSGARGSAAQIRQLAGMRGLMARPDGSIIETPITANFKEGLNVLQYFISTHGARKGLADTALKTANSGYLTRRLVDVAQDVVVTEHDCGTLEGVVMTPHIEGGDVKVALTELALGRVVSEDILKPGTDEVLIPRNTLLDEKWCKVINDNSVDQIKVRSVVTCDSDFGCCAQCYGRDLARGHLVNQGEAVGVIAAQSIGEPGTQLTMRTFHIGGAASTAAAENSIQAKNNGSVKLHNAKFVTNKDGKLVITSRASELTIIDEFGRTKEKHKLPYGSMLSKADGDAVAAGETVANWEAHTMPIITEVAGRVQFVDMIDGVTVSRQTDDLTGLSSSEVTEAAARPAAGKDMRPAIKLVDANGKDVLIPGTDMPAQYFLPGKAIVNLDDGAEVNVGDTLARIPQKSGGNKDITGGLPRVADLFEARKPKEPAILAEHSGTVSFGKETKGKRRLIITRDSGDTYEEMIPKHRQLNVFEGERIERGDVIADGPESPHDILRLRGIHAVTTYIANEVQEVYRLQGVKINDKHIETIVRQMLRKCTITFAGDSEFLPGETVEYSQVKIANRKLVEEGKEPARFERELLGITKASLATESFISAASFQETTRVLTEAAVSGKRDDLRGLKENVIVGRLIPAGTGFAYHQDRQAKRAQEQQGPSAEQATDNLAALLNAGFSSDDE</sequence>
<gene>
    <name evidence="1" type="primary">rpoC</name>
    <name type="ordered locus">VC_0329</name>
</gene>
<proteinExistence type="inferred from homology"/>
<protein>
    <recommendedName>
        <fullName evidence="1">DNA-directed RNA polymerase subunit beta'</fullName>
        <shortName evidence="1">RNAP subunit beta'</shortName>
        <ecNumber evidence="1">2.7.7.6</ecNumber>
    </recommendedName>
    <alternativeName>
        <fullName evidence="1">RNA polymerase subunit beta'</fullName>
    </alternativeName>
    <alternativeName>
        <fullName evidence="1">Transcriptase subunit beta'</fullName>
    </alternativeName>
</protein>
<name>RPOC_VIBCH</name>
<feature type="chain" id="PRO_0000067827" description="DNA-directed RNA polymerase subunit beta'">
    <location>
        <begin position="1"/>
        <end position="1401"/>
    </location>
</feature>
<feature type="region of interest" description="Disordered" evidence="2">
    <location>
        <begin position="1368"/>
        <end position="1387"/>
    </location>
</feature>
<feature type="compositionally biased region" description="Polar residues" evidence="2">
    <location>
        <begin position="1375"/>
        <end position="1386"/>
    </location>
</feature>
<feature type="binding site" evidence="1">
    <location>
        <position position="70"/>
    </location>
    <ligand>
        <name>Zn(2+)</name>
        <dbReference type="ChEBI" id="CHEBI:29105"/>
        <label>1</label>
    </ligand>
</feature>
<feature type="binding site" evidence="1">
    <location>
        <position position="72"/>
    </location>
    <ligand>
        <name>Zn(2+)</name>
        <dbReference type="ChEBI" id="CHEBI:29105"/>
        <label>1</label>
    </ligand>
</feature>
<feature type="binding site" evidence="1">
    <location>
        <position position="85"/>
    </location>
    <ligand>
        <name>Zn(2+)</name>
        <dbReference type="ChEBI" id="CHEBI:29105"/>
        <label>1</label>
    </ligand>
</feature>
<feature type="binding site" evidence="1">
    <location>
        <position position="88"/>
    </location>
    <ligand>
        <name>Zn(2+)</name>
        <dbReference type="ChEBI" id="CHEBI:29105"/>
        <label>1</label>
    </ligand>
</feature>
<feature type="binding site" evidence="1">
    <location>
        <position position="460"/>
    </location>
    <ligand>
        <name>Mg(2+)</name>
        <dbReference type="ChEBI" id="CHEBI:18420"/>
    </ligand>
</feature>
<feature type="binding site" evidence="1">
    <location>
        <position position="462"/>
    </location>
    <ligand>
        <name>Mg(2+)</name>
        <dbReference type="ChEBI" id="CHEBI:18420"/>
    </ligand>
</feature>
<feature type="binding site" evidence="1">
    <location>
        <position position="464"/>
    </location>
    <ligand>
        <name>Mg(2+)</name>
        <dbReference type="ChEBI" id="CHEBI:18420"/>
    </ligand>
</feature>
<feature type="binding site" evidence="1">
    <location>
        <position position="814"/>
    </location>
    <ligand>
        <name>Zn(2+)</name>
        <dbReference type="ChEBI" id="CHEBI:29105"/>
        <label>2</label>
    </ligand>
</feature>
<feature type="binding site" evidence="1">
    <location>
        <position position="888"/>
    </location>
    <ligand>
        <name>Zn(2+)</name>
        <dbReference type="ChEBI" id="CHEBI:29105"/>
        <label>2</label>
    </ligand>
</feature>
<feature type="binding site" evidence="1">
    <location>
        <position position="895"/>
    </location>
    <ligand>
        <name>Zn(2+)</name>
        <dbReference type="ChEBI" id="CHEBI:29105"/>
        <label>2</label>
    </ligand>
</feature>
<feature type="binding site" evidence="1">
    <location>
        <position position="898"/>
    </location>
    <ligand>
        <name>Zn(2+)</name>
        <dbReference type="ChEBI" id="CHEBI:29105"/>
        <label>2</label>
    </ligand>
</feature>
<reference key="1">
    <citation type="journal article" date="2000" name="Nature">
        <title>DNA sequence of both chromosomes of the cholera pathogen Vibrio cholerae.</title>
        <authorList>
            <person name="Heidelberg J.F."/>
            <person name="Eisen J.A."/>
            <person name="Nelson W.C."/>
            <person name="Clayton R.A."/>
            <person name="Gwinn M.L."/>
            <person name="Dodson R.J."/>
            <person name="Haft D.H."/>
            <person name="Hickey E.K."/>
            <person name="Peterson J.D."/>
            <person name="Umayam L.A."/>
            <person name="Gill S.R."/>
            <person name="Nelson K.E."/>
            <person name="Read T.D."/>
            <person name="Tettelin H."/>
            <person name="Richardson D.L."/>
            <person name="Ermolaeva M.D."/>
            <person name="Vamathevan J.J."/>
            <person name="Bass S."/>
            <person name="Qin H."/>
            <person name="Dragoi I."/>
            <person name="Sellers P."/>
            <person name="McDonald L.A."/>
            <person name="Utterback T.R."/>
            <person name="Fleischmann R.D."/>
            <person name="Nierman W.C."/>
            <person name="White O."/>
            <person name="Salzberg S.L."/>
            <person name="Smith H.O."/>
            <person name="Colwell R.R."/>
            <person name="Mekalanos J.J."/>
            <person name="Venter J.C."/>
            <person name="Fraser C.M."/>
        </authorList>
    </citation>
    <scope>NUCLEOTIDE SEQUENCE [LARGE SCALE GENOMIC DNA]</scope>
    <source>
        <strain>ATCC 39315 / El Tor Inaba N16961</strain>
    </source>
</reference>
<evidence type="ECO:0000255" key="1">
    <source>
        <dbReference type="HAMAP-Rule" id="MF_01322"/>
    </source>
</evidence>
<evidence type="ECO:0000256" key="2">
    <source>
        <dbReference type="SAM" id="MobiDB-lite"/>
    </source>
</evidence>
<comment type="function">
    <text evidence="1">DNA-dependent RNA polymerase catalyzes the transcription of DNA into RNA using the four ribonucleoside triphosphates as substrates.</text>
</comment>
<comment type="catalytic activity">
    <reaction evidence="1">
        <text>RNA(n) + a ribonucleoside 5'-triphosphate = RNA(n+1) + diphosphate</text>
        <dbReference type="Rhea" id="RHEA:21248"/>
        <dbReference type="Rhea" id="RHEA-COMP:14527"/>
        <dbReference type="Rhea" id="RHEA-COMP:17342"/>
        <dbReference type="ChEBI" id="CHEBI:33019"/>
        <dbReference type="ChEBI" id="CHEBI:61557"/>
        <dbReference type="ChEBI" id="CHEBI:140395"/>
        <dbReference type="EC" id="2.7.7.6"/>
    </reaction>
</comment>
<comment type="cofactor">
    <cofactor evidence="1">
        <name>Mg(2+)</name>
        <dbReference type="ChEBI" id="CHEBI:18420"/>
    </cofactor>
    <text evidence="1">Binds 1 Mg(2+) ion per subunit.</text>
</comment>
<comment type="cofactor">
    <cofactor evidence="1">
        <name>Zn(2+)</name>
        <dbReference type="ChEBI" id="CHEBI:29105"/>
    </cofactor>
    <text evidence="1">Binds 2 Zn(2+) ions per subunit.</text>
</comment>
<comment type="subunit">
    <text evidence="1">The RNAP catalytic core consists of 2 alpha, 1 beta, 1 beta' and 1 omega subunit. When a sigma factor is associated with the core the holoenzyme is formed, which can initiate transcription.</text>
</comment>
<comment type="similarity">
    <text evidence="1">Belongs to the RNA polymerase beta' chain family.</text>
</comment>
<keyword id="KW-0240">DNA-directed RNA polymerase</keyword>
<keyword id="KW-0460">Magnesium</keyword>
<keyword id="KW-0479">Metal-binding</keyword>
<keyword id="KW-0548">Nucleotidyltransferase</keyword>
<keyword id="KW-1185">Reference proteome</keyword>
<keyword id="KW-0804">Transcription</keyword>
<keyword id="KW-0808">Transferase</keyword>
<keyword id="KW-0862">Zinc</keyword>